<feature type="peptide" id="PRO_0000421550" description="Extended FMRFamide-10" evidence="3">
    <location>
        <begin position="1"/>
        <end position="11"/>
    </location>
</feature>
<feature type="unsure residue" description="L or I" evidence="3">
    <location>
        <position position="8"/>
    </location>
</feature>
<organism>
    <name type="scientific">Karoophasma biedouwense</name>
    <name type="common">Gladiator</name>
    <name type="synonym">Heel-walker</name>
    <dbReference type="NCBI Taxonomy" id="253133"/>
    <lineage>
        <taxon>Eukaryota</taxon>
        <taxon>Metazoa</taxon>
        <taxon>Ecdysozoa</taxon>
        <taxon>Arthropoda</taxon>
        <taxon>Hexapoda</taxon>
        <taxon>Insecta</taxon>
        <taxon>Pterygota</taxon>
        <taxon>Neoptera</taxon>
        <taxon>Polyneoptera</taxon>
        <taxon>Mantophasmatodea</taxon>
        <taxon>Austrophasmatidae</taxon>
        <taxon>Karoophasma</taxon>
    </lineage>
</organism>
<proteinExistence type="evidence at protein level"/>
<reference evidence="5" key="1">
    <citation type="journal article" date="2012" name="Syst. Biol.">
        <title>Peptidomics-based phylogeny and biogeography of Mantophasmatodea (Hexapoda).</title>
        <authorList>
            <person name="Predel R."/>
            <person name="Neupert S."/>
            <person name="Huetteroth W."/>
            <person name="Kahnt J."/>
            <person name="Waidelich D."/>
            <person name="Roth S."/>
        </authorList>
    </citation>
    <scope>PROTEIN SEQUENCE</scope>
    <source>
        <tissue evidence="3">Thoracic perisympathetic organs</tissue>
    </source>
</reference>
<evidence type="ECO:0000250" key="1">
    <source>
        <dbReference type="UniProtKB" id="P34405"/>
    </source>
</evidence>
<evidence type="ECO:0000255" key="2"/>
<evidence type="ECO:0000269" key="3">
    <source>
    </source>
</evidence>
<evidence type="ECO:0000303" key="4">
    <source>
    </source>
</evidence>
<evidence type="ECO:0000305" key="5"/>
<evidence type="ECO:0000305" key="6">
    <source>
    </source>
</evidence>
<protein>
    <recommendedName>
        <fullName evidence="4">Extended FMRFamide-10</fullName>
        <shortName evidence="4">FMRFa-10</shortName>
    </recommendedName>
</protein>
<comment type="function">
    <text evidence="1">FMRFamides and FMRFamide-like peptides are neuropeptides.</text>
</comment>
<comment type="subcellular location">
    <subcellularLocation>
        <location evidence="6">Secreted</location>
    </subcellularLocation>
</comment>
<comment type="similarity">
    <text evidence="2">Belongs to the FARP (FMRF amide related peptide) family.</text>
</comment>
<sequence length="11" mass="1201">PAPDSSFLRDP</sequence>
<keyword id="KW-0903">Direct protein sequencing</keyword>
<keyword id="KW-0527">Neuropeptide</keyword>
<keyword id="KW-0964">Secreted</keyword>
<name>FAR10_KARBI</name>
<accession>B3A070</accession>
<dbReference type="GO" id="GO:0005576">
    <property type="term" value="C:extracellular region"/>
    <property type="evidence" value="ECO:0007669"/>
    <property type="project" value="UniProtKB-SubCell"/>
</dbReference>
<dbReference type="GO" id="GO:0007218">
    <property type="term" value="P:neuropeptide signaling pathway"/>
    <property type="evidence" value="ECO:0007669"/>
    <property type="project" value="UniProtKB-KW"/>
</dbReference>